<dbReference type="EC" id="4.1.1.48" evidence="1"/>
<dbReference type="EMBL" id="BX548175">
    <property type="protein sequence ID" value="CAE20511.1"/>
    <property type="molecule type" value="Genomic_DNA"/>
</dbReference>
<dbReference type="RefSeq" id="WP_011129715.1">
    <property type="nucleotide sequence ID" value="NC_005071.1"/>
</dbReference>
<dbReference type="SMR" id="Q7TV44"/>
<dbReference type="KEGG" id="pmt:PMT_0336"/>
<dbReference type="eggNOG" id="COG0134">
    <property type="taxonomic scope" value="Bacteria"/>
</dbReference>
<dbReference type="HOGENOM" id="CLU_034247_2_0_3"/>
<dbReference type="OrthoDB" id="9804217at2"/>
<dbReference type="UniPathway" id="UPA00035">
    <property type="reaction ID" value="UER00043"/>
</dbReference>
<dbReference type="Proteomes" id="UP000001423">
    <property type="component" value="Chromosome"/>
</dbReference>
<dbReference type="GO" id="GO:0004425">
    <property type="term" value="F:indole-3-glycerol-phosphate synthase activity"/>
    <property type="evidence" value="ECO:0007669"/>
    <property type="project" value="UniProtKB-UniRule"/>
</dbReference>
<dbReference type="GO" id="GO:0004640">
    <property type="term" value="F:phosphoribosylanthranilate isomerase activity"/>
    <property type="evidence" value="ECO:0007669"/>
    <property type="project" value="TreeGrafter"/>
</dbReference>
<dbReference type="GO" id="GO:0000162">
    <property type="term" value="P:L-tryptophan biosynthetic process"/>
    <property type="evidence" value="ECO:0007669"/>
    <property type="project" value="UniProtKB-UniRule"/>
</dbReference>
<dbReference type="CDD" id="cd00331">
    <property type="entry name" value="IGPS"/>
    <property type="match status" value="1"/>
</dbReference>
<dbReference type="FunFam" id="3.20.20.70:FF:000024">
    <property type="entry name" value="Indole-3-glycerol phosphate synthase"/>
    <property type="match status" value="1"/>
</dbReference>
<dbReference type="Gene3D" id="3.20.20.70">
    <property type="entry name" value="Aldolase class I"/>
    <property type="match status" value="1"/>
</dbReference>
<dbReference type="HAMAP" id="MF_00134_B">
    <property type="entry name" value="IGPS_B"/>
    <property type="match status" value="1"/>
</dbReference>
<dbReference type="InterPro" id="IPR013785">
    <property type="entry name" value="Aldolase_TIM"/>
</dbReference>
<dbReference type="InterPro" id="IPR045186">
    <property type="entry name" value="Indole-3-glycerol_P_synth"/>
</dbReference>
<dbReference type="InterPro" id="IPR013798">
    <property type="entry name" value="Indole-3-glycerol_P_synth_dom"/>
</dbReference>
<dbReference type="InterPro" id="IPR001468">
    <property type="entry name" value="Indole-3-GlycerolPSynthase_CS"/>
</dbReference>
<dbReference type="InterPro" id="IPR011060">
    <property type="entry name" value="RibuloseP-bd_barrel"/>
</dbReference>
<dbReference type="NCBIfam" id="NF001372">
    <property type="entry name" value="PRK00278.1-4"/>
    <property type="match status" value="1"/>
</dbReference>
<dbReference type="NCBIfam" id="NF001377">
    <property type="entry name" value="PRK00278.2-4"/>
    <property type="match status" value="1"/>
</dbReference>
<dbReference type="PANTHER" id="PTHR22854:SF2">
    <property type="entry name" value="INDOLE-3-GLYCEROL-PHOSPHATE SYNTHASE"/>
    <property type="match status" value="1"/>
</dbReference>
<dbReference type="PANTHER" id="PTHR22854">
    <property type="entry name" value="TRYPTOPHAN BIOSYNTHESIS PROTEIN"/>
    <property type="match status" value="1"/>
</dbReference>
<dbReference type="Pfam" id="PF00218">
    <property type="entry name" value="IGPS"/>
    <property type="match status" value="1"/>
</dbReference>
<dbReference type="SUPFAM" id="SSF51366">
    <property type="entry name" value="Ribulose-phoshate binding barrel"/>
    <property type="match status" value="1"/>
</dbReference>
<dbReference type="PROSITE" id="PS00614">
    <property type="entry name" value="IGPS"/>
    <property type="match status" value="1"/>
</dbReference>
<organism>
    <name type="scientific">Prochlorococcus marinus (strain MIT 9313)</name>
    <dbReference type="NCBI Taxonomy" id="74547"/>
    <lineage>
        <taxon>Bacteria</taxon>
        <taxon>Bacillati</taxon>
        <taxon>Cyanobacteriota</taxon>
        <taxon>Cyanophyceae</taxon>
        <taxon>Synechococcales</taxon>
        <taxon>Prochlorococcaceae</taxon>
        <taxon>Prochlorococcus</taxon>
    </lineage>
</organism>
<feature type="chain" id="PRO_1000018525" description="Indole-3-glycerol phosphate synthase">
    <location>
        <begin position="1"/>
        <end position="301"/>
    </location>
</feature>
<name>TRPC_PROMM</name>
<protein>
    <recommendedName>
        <fullName evidence="1">Indole-3-glycerol phosphate synthase</fullName>
        <shortName evidence="1">IGPS</shortName>
        <ecNumber evidence="1">4.1.1.48</ecNumber>
    </recommendedName>
</protein>
<gene>
    <name evidence="1" type="primary">trpC</name>
    <name type="ordered locus">PMT_0336</name>
</gene>
<sequence>MEIRRRPPNPSVKVAHLQYAIPHADAEPRHILEKIVWEKDREVETARQRVPLETLKSQIADLPIPRDFIAALRQASRAPAVIAEVKKASPSQGVIRADFDPVLIANAYAEGGASCLSVLTDKSFFQGGFEVLVEVRQTVGLPLLCKDFILTPYQLYQARAAGADAALLIVAILSDQDLTYLSKVANSLGLNVLVEVHDAEELERVLNLGGFPLIGINNRDLTTFETDLETTETLSQQFATRLQQQGVLLVSESGLFNRADLDRVQAVGAEAVLVGEALMRQSDVCAGLQQLMIGDEGTSNS</sequence>
<comment type="catalytic activity">
    <reaction evidence="1">
        <text>1-(2-carboxyphenylamino)-1-deoxy-D-ribulose 5-phosphate + H(+) = (1S,2R)-1-C-(indol-3-yl)glycerol 3-phosphate + CO2 + H2O</text>
        <dbReference type="Rhea" id="RHEA:23476"/>
        <dbReference type="ChEBI" id="CHEBI:15377"/>
        <dbReference type="ChEBI" id="CHEBI:15378"/>
        <dbReference type="ChEBI" id="CHEBI:16526"/>
        <dbReference type="ChEBI" id="CHEBI:58613"/>
        <dbReference type="ChEBI" id="CHEBI:58866"/>
        <dbReference type="EC" id="4.1.1.48"/>
    </reaction>
</comment>
<comment type="pathway">
    <text evidence="1">Amino-acid biosynthesis; L-tryptophan biosynthesis; L-tryptophan from chorismate: step 4/5.</text>
</comment>
<comment type="similarity">
    <text evidence="1">Belongs to the TrpC family.</text>
</comment>
<keyword id="KW-0028">Amino-acid biosynthesis</keyword>
<keyword id="KW-0057">Aromatic amino acid biosynthesis</keyword>
<keyword id="KW-0210">Decarboxylase</keyword>
<keyword id="KW-0456">Lyase</keyword>
<keyword id="KW-1185">Reference proteome</keyword>
<keyword id="KW-0822">Tryptophan biosynthesis</keyword>
<reference key="1">
    <citation type="journal article" date="2003" name="Nature">
        <title>Genome divergence in two Prochlorococcus ecotypes reflects oceanic niche differentiation.</title>
        <authorList>
            <person name="Rocap G."/>
            <person name="Larimer F.W."/>
            <person name="Lamerdin J.E."/>
            <person name="Malfatti S."/>
            <person name="Chain P."/>
            <person name="Ahlgren N.A."/>
            <person name="Arellano A."/>
            <person name="Coleman M."/>
            <person name="Hauser L."/>
            <person name="Hess W.R."/>
            <person name="Johnson Z.I."/>
            <person name="Land M.L."/>
            <person name="Lindell D."/>
            <person name="Post A.F."/>
            <person name="Regala W."/>
            <person name="Shah M."/>
            <person name="Shaw S.L."/>
            <person name="Steglich C."/>
            <person name="Sullivan M.B."/>
            <person name="Ting C.S."/>
            <person name="Tolonen A."/>
            <person name="Webb E.A."/>
            <person name="Zinser E.R."/>
            <person name="Chisholm S.W."/>
        </authorList>
    </citation>
    <scope>NUCLEOTIDE SEQUENCE [LARGE SCALE GENOMIC DNA]</scope>
    <source>
        <strain>MIT 9313</strain>
    </source>
</reference>
<evidence type="ECO:0000255" key="1">
    <source>
        <dbReference type="HAMAP-Rule" id="MF_00134"/>
    </source>
</evidence>
<accession>Q7TV44</accession>
<proteinExistence type="inferred from homology"/>